<gene>
    <name evidence="1" type="primary">rpmE</name>
    <name type="ordered locus">Kole_0244</name>
</gene>
<dbReference type="EMBL" id="CP001634">
    <property type="protein sequence ID" value="ACR78969.1"/>
    <property type="molecule type" value="Genomic_DNA"/>
</dbReference>
<dbReference type="RefSeq" id="WP_012744756.1">
    <property type="nucleotide sequence ID" value="NC_012785.1"/>
</dbReference>
<dbReference type="STRING" id="521045.Kole_0244"/>
<dbReference type="KEGG" id="kol:Kole_0244"/>
<dbReference type="eggNOG" id="COG0254">
    <property type="taxonomic scope" value="Bacteria"/>
</dbReference>
<dbReference type="HOGENOM" id="CLU_114306_4_3_0"/>
<dbReference type="OrthoDB" id="9803251at2"/>
<dbReference type="Proteomes" id="UP000002382">
    <property type="component" value="Chromosome"/>
</dbReference>
<dbReference type="GO" id="GO:1990904">
    <property type="term" value="C:ribonucleoprotein complex"/>
    <property type="evidence" value="ECO:0007669"/>
    <property type="project" value="UniProtKB-KW"/>
</dbReference>
<dbReference type="GO" id="GO:0005840">
    <property type="term" value="C:ribosome"/>
    <property type="evidence" value="ECO:0007669"/>
    <property type="project" value="UniProtKB-KW"/>
</dbReference>
<dbReference type="GO" id="GO:0046872">
    <property type="term" value="F:metal ion binding"/>
    <property type="evidence" value="ECO:0007669"/>
    <property type="project" value="UniProtKB-KW"/>
</dbReference>
<dbReference type="GO" id="GO:0019843">
    <property type="term" value="F:rRNA binding"/>
    <property type="evidence" value="ECO:0007669"/>
    <property type="project" value="UniProtKB-KW"/>
</dbReference>
<dbReference type="GO" id="GO:0003735">
    <property type="term" value="F:structural constituent of ribosome"/>
    <property type="evidence" value="ECO:0007669"/>
    <property type="project" value="InterPro"/>
</dbReference>
<dbReference type="GO" id="GO:0006412">
    <property type="term" value="P:translation"/>
    <property type="evidence" value="ECO:0007669"/>
    <property type="project" value="UniProtKB-UniRule"/>
</dbReference>
<dbReference type="Gene3D" id="4.10.830.30">
    <property type="entry name" value="Ribosomal protein L31"/>
    <property type="match status" value="1"/>
</dbReference>
<dbReference type="HAMAP" id="MF_00501">
    <property type="entry name" value="Ribosomal_bL31_1"/>
    <property type="match status" value="1"/>
</dbReference>
<dbReference type="InterPro" id="IPR034704">
    <property type="entry name" value="Ribosomal_bL28/bL31-like_sf"/>
</dbReference>
<dbReference type="InterPro" id="IPR002150">
    <property type="entry name" value="Ribosomal_bL31"/>
</dbReference>
<dbReference type="InterPro" id="IPR027491">
    <property type="entry name" value="Ribosomal_bL31_A"/>
</dbReference>
<dbReference type="InterPro" id="IPR042105">
    <property type="entry name" value="Ribosomal_bL31_sf"/>
</dbReference>
<dbReference type="NCBIfam" id="TIGR00105">
    <property type="entry name" value="L31"/>
    <property type="match status" value="1"/>
</dbReference>
<dbReference type="NCBIfam" id="NF000612">
    <property type="entry name" value="PRK00019.1"/>
    <property type="match status" value="1"/>
</dbReference>
<dbReference type="PANTHER" id="PTHR33280">
    <property type="entry name" value="50S RIBOSOMAL PROTEIN L31, CHLOROPLASTIC"/>
    <property type="match status" value="1"/>
</dbReference>
<dbReference type="PANTHER" id="PTHR33280:SF1">
    <property type="entry name" value="LARGE RIBOSOMAL SUBUNIT PROTEIN BL31C"/>
    <property type="match status" value="1"/>
</dbReference>
<dbReference type="Pfam" id="PF01197">
    <property type="entry name" value="Ribosomal_L31"/>
    <property type="match status" value="1"/>
</dbReference>
<dbReference type="PRINTS" id="PR01249">
    <property type="entry name" value="RIBOSOMALL31"/>
</dbReference>
<dbReference type="SUPFAM" id="SSF143800">
    <property type="entry name" value="L28p-like"/>
    <property type="match status" value="1"/>
</dbReference>
<accession>C5CIS7</accession>
<reference key="1">
    <citation type="submission" date="2009-06" db="EMBL/GenBank/DDBJ databases">
        <title>Complete sequence of Thermotogales bacterium TBF 19.5.1.</title>
        <authorList>
            <consortium name="US DOE Joint Genome Institute"/>
            <person name="Lucas S."/>
            <person name="Copeland A."/>
            <person name="Lapidus A."/>
            <person name="Glavina del Rio T."/>
            <person name="Tice H."/>
            <person name="Bruce D."/>
            <person name="Goodwin L."/>
            <person name="Pitluck S."/>
            <person name="Chertkov O."/>
            <person name="Brettin T."/>
            <person name="Detter J.C."/>
            <person name="Han C."/>
            <person name="Schmutz J."/>
            <person name="Larimer F."/>
            <person name="Land M."/>
            <person name="Hauser L."/>
            <person name="Kyrpides N."/>
            <person name="Ovchinnikova G."/>
            <person name="Noll K."/>
        </authorList>
    </citation>
    <scope>NUCLEOTIDE SEQUENCE [LARGE SCALE GENOMIC DNA]</scope>
    <source>
        <strain>ATCC BAA-1733 / DSM 21960 / TBF 19.5.1</strain>
    </source>
</reference>
<feature type="chain" id="PRO_1000206526" description="Large ribosomal subunit protein bL31">
    <location>
        <begin position="1"/>
        <end position="69"/>
    </location>
</feature>
<feature type="binding site" evidence="1">
    <location>
        <position position="16"/>
    </location>
    <ligand>
        <name>Zn(2+)</name>
        <dbReference type="ChEBI" id="CHEBI:29105"/>
    </ligand>
</feature>
<feature type="binding site" evidence="1">
    <location>
        <position position="18"/>
    </location>
    <ligand>
        <name>Zn(2+)</name>
        <dbReference type="ChEBI" id="CHEBI:29105"/>
    </ligand>
</feature>
<feature type="binding site" evidence="1">
    <location>
        <position position="36"/>
    </location>
    <ligand>
        <name>Zn(2+)</name>
        <dbReference type="ChEBI" id="CHEBI:29105"/>
    </ligand>
</feature>
<feature type="binding site" evidence="1">
    <location>
        <position position="39"/>
    </location>
    <ligand>
        <name>Zn(2+)</name>
        <dbReference type="ChEBI" id="CHEBI:29105"/>
    </ligand>
</feature>
<evidence type="ECO:0000255" key="1">
    <source>
        <dbReference type="HAMAP-Rule" id="MF_00501"/>
    </source>
</evidence>
<evidence type="ECO:0000305" key="2"/>
<protein>
    <recommendedName>
        <fullName evidence="1">Large ribosomal subunit protein bL31</fullName>
    </recommendedName>
    <alternativeName>
        <fullName evidence="2">50S ribosomal protein L31</fullName>
    </alternativeName>
</protein>
<organism>
    <name type="scientific">Kosmotoga olearia (strain ATCC BAA-1733 / DSM 21960 / TBF 19.5.1)</name>
    <dbReference type="NCBI Taxonomy" id="521045"/>
    <lineage>
        <taxon>Bacteria</taxon>
        <taxon>Thermotogati</taxon>
        <taxon>Thermotogota</taxon>
        <taxon>Thermotogae</taxon>
        <taxon>Kosmotogales</taxon>
        <taxon>Kosmotogaceae</taxon>
        <taxon>Kosmotoga</taxon>
    </lineage>
</organism>
<proteinExistence type="inferred from homology"/>
<comment type="function">
    <text evidence="1">Binds the 23S rRNA.</text>
</comment>
<comment type="cofactor">
    <cofactor evidence="1">
        <name>Zn(2+)</name>
        <dbReference type="ChEBI" id="CHEBI:29105"/>
    </cofactor>
    <text evidence="1">Binds 1 zinc ion per subunit.</text>
</comment>
<comment type="subunit">
    <text evidence="1">Part of the 50S ribosomal subunit.</text>
</comment>
<comment type="similarity">
    <text evidence="1">Belongs to the bacterial ribosomal protein bL31 family. Type A subfamily.</text>
</comment>
<name>RL31_KOSOT</name>
<keyword id="KW-0479">Metal-binding</keyword>
<keyword id="KW-1185">Reference proteome</keyword>
<keyword id="KW-0687">Ribonucleoprotein</keyword>
<keyword id="KW-0689">Ribosomal protein</keyword>
<keyword id="KW-0694">RNA-binding</keyword>
<keyword id="KW-0699">rRNA-binding</keyword>
<keyword id="KW-0862">Zinc</keyword>
<sequence length="69" mass="7981">MKKGIHPELKLITVKCTCGAEHKFWTMKEDIKIDLCSNCHPFYKGDTGSLIVDTEGRVQKFRNKYGDNY</sequence>